<organism>
    <name type="scientific">Piper cenocladum</name>
    <name type="common">Ant piper</name>
    <dbReference type="NCBI Taxonomy" id="398741"/>
    <lineage>
        <taxon>Eukaryota</taxon>
        <taxon>Viridiplantae</taxon>
        <taxon>Streptophyta</taxon>
        <taxon>Embryophyta</taxon>
        <taxon>Tracheophyta</taxon>
        <taxon>Spermatophyta</taxon>
        <taxon>Magnoliopsida</taxon>
        <taxon>Magnoliidae</taxon>
        <taxon>Piperales</taxon>
        <taxon>Piperaceae</taxon>
        <taxon>Piper</taxon>
    </lineage>
</organism>
<keyword id="KW-0150">Chloroplast</keyword>
<keyword id="KW-0507">mRNA processing</keyword>
<keyword id="KW-0934">Plastid</keyword>
<keyword id="KW-0694">RNA-binding</keyword>
<keyword id="KW-0819">tRNA processing</keyword>
<accession>Q06GS9</accession>
<name>MATK_PIPCE</name>
<gene>
    <name evidence="1" type="primary">matK</name>
</gene>
<proteinExistence type="inferred from homology"/>
<comment type="function">
    <text evidence="1">Usually encoded in the trnK tRNA gene intron. Probably assists in splicing its own and other chloroplast group II introns.</text>
</comment>
<comment type="subcellular location">
    <subcellularLocation>
        <location>Plastid</location>
        <location>Chloroplast</location>
    </subcellularLocation>
</comment>
<comment type="similarity">
    <text evidence="1">Belongs to the intron maturase 2 family. MatK subfamily.</text>
</comment>
<geneLocation type="chloroplast"/>
<feature type="chain" id="PRO_0000355957" description="Maturase K">
    <location>
        <begin position="1"/>
        <end position="512"/>
    </location>
</feature>
<sequence length="512" mass="61088">MEKFKRYLETFRSEQKYFLYPLLFQEYIYALGHDHGLNGPIPYESIENLGYGDKSSSLIVKRLIIRMHKQNHFLISCNENDFQQNRLLGRKNNLDSKIISEAFSIIVEIPFSFQLVSCLEKKREIAKSHNLRSIHSIFPFFEDNIFYLYHISDVLIPYPIHPEILVQTLRYWIQDVPSLHLLRIFLYEYCHSGSFISKKKFFSFSKKENERLSLFIYNSYVYEWESIFLFIRKQSSHLRSISWEALLERVHFYGKIEHLVVVLCNDFQKALWVFKDCFMHYVRYQGKSLLISKGTDLLMKKWKYHFIYLWQCNFHLWSQPHRIHINQLDNRSFHFLGYASSVRINLSVVKSQILENSFLMETSVKKFETTVPIISLIGSLSKEKFCNLSGHPTSKAIWADSSDSDIMERFGRVCRNLSHYYSGCSKKQILYRIKYILRLSCARTLARKHKSTVRVFLKRLGSGFLKEFLAEEEQVLSFFFPRSYPTSYRSNKDKERIWYLDITHTNDLANHE</sequence>
<reference key="1">
    <citation type="journal article" date="2006" name="BMC Evol. Biol.">
        <title>Complete plastid genome sequences of Drimys, Liriodendron, and Piper: implications for the phylogenetic relationships of magnoliids.</title>
        <authorList>
            <person name="Cai Z."/>
            <person name="Penaflor C."/>
            <person name="Kuehl J.V."/>
            <person name="Leebens-Mack J."/>
            <person name="Carlson J.E."/>
            <person name="dePamphilis C.W."/>
            <person name="Boore J.L."/>
            <person name="Jansen R.K."/>
        </authorList>
    </citation>
    <scope>NUCLEOTIDE SEQUENCE [LARGE SCALE GENOMIC DNA]</scope>
</reference>
<protein>
    <recommendedName>
        <fullName evidence="1">Maturase K</fullName>
    </recommendedName>
    <alternativeName>
        <fullName evidence="1">Intron maturase</fullName>
    </alternativeName>
</protein>
<dbReference type="EMBL" id="DQ887677">
    <property type="protein sequence ID" value="ABI14453.1"/>
    <property type="molecule type" value="Genomic_DNA"/>
</dbReference>
<dbReference type="RefSeq" id="YP_784454.1">
    <property type="nucleotide sequence ID" value="NC_008457.1"/>
</dbReference>
<dbReference type="GeneID" id="4363708"/>
<dbReference type="GO" id="GO:0009507">
    <property type="term" value="C:chloroplast"/>
    <property type="evidence" value="ECO:0007669"/>
    <property type="project" value="UniProtKB-SubCell"/>
</dbReference>
<dbReference type="GO" id="GO:0003723">
    <property type="term" value="F:RNA binding"/>
    <property type="evidence" value="ECO:0007669"/>
    <property type="project" value="UniProtKB-KW"/>
</dbReference>
<dbReference type="GO" id="GO:0006397">
    <property type="term" value="P:mRNA processing"/>
    <property type="evidence" value="ECO:0007669"/>
    <property type="project" value="UniProtKB-KW"/>
</dbReference>
<dbReference type="GO" id="GO:0008380">
    <property type="term" value="P:RNA splicing"/>
    <property type="evidence" value="ECO:0007669"/>
    <property type="project" value="UniProtKB-UniRule"/>
</dbReference>
<dbReference type="GO" id="GO:0008033">
    <property type="term" value="P:tRNA processing"/>
    <property type="evidence" value="ECO:0007669"/>
    <property type="project" value="UniProtKB-KW"/>
</dbReference>
<dbReference type="HAMAP" id="MF_01390">
    <property type="entry name" value="MatK"/>
    <property type="match status" value="1"/>
</dbReference>
<dbReference type="InterPro" id="IPR024937">
    <property type="entry name" value="Domain_X"/>
</dbReference>
<dbReference type="InterPro" id="IPR002866">
    <property type="entry name" value="Maturase_MatK"/>
</dbReference>
<dbReference type="InterPro" id="IPR024942">
    <property type="entry name" value="Maturase_MatK_N"/>
</dbReference>
<dbReference type="PANTHER" id="PTHR34811">
    <property type="entry name" value="MATURASE K"/>
    <property type="match status" value="1"/>
</dbReference>
<dbReference type="PANTHER" id="PTHR34811:SF1">
    <property type="entry name" value="MATURASE K"/>
    <property type="match status" value="1"/>
</dbReference>
<dbReference type="Pfam" id="PF01348">
    <property type="entry name" value="Intron_maturas2"/>
    <property type="match status" value="1"/>
</dbReference>
<dbReference type="Pfam" id="PF01824">
    <property type="entry name" value="MatK_N"/>
    <property type="match status" value="1"/>
</dbReference>
<evidence type="ECO:0000255" key="1">
    <source>
        <dbReference type="HAMAP-Rule" id="MF_01390"/>
    </source>
</evidence>